<comment type="function">
    <text>Tachykinins are active peptides which excite neurons, evoke behavioral responses, are potent vasodilators and secretagogues, and contract (directly or indirectly) many smooth muscles.</text>
</comment>
<comment type="subcellular location">
    <subcellularLocation>
        <location>Secreted</location>
    </subcellularLocation>
</comment>
<comment type="similarity">
    <text evidence="2">Belongs to the tachykinin family.</text>
</comment>
<evidence type="ECO:0000269" key="1">
    <source>
    </source>
</evidence>
<evidence type="ECO:0000305" key="2"/>
<evidence type="ECO:0007829" key="3">
    <source>
        <dbReference type="PDB" id="1N6T"/>
    </source>
</evidence>
<accession>P19851</accession>
<organism>
    <name type="scientific">Gallus gallus</name>
    <name type="common">Chicken</name>
    <dbReference type="NCBI Taxonomy" id="9031"/>
    <lineage>
        <taxon>Eukaryota</taxon>
        <taxon>Metazoa</taxon>
        <taxon>Chordata</taxon>
        <taxon>Craniata</taxon>
        <taxon>Vertebrata</taxon>
        <taxon>Euteleostomi</taxon>
        <taxon>Archelosauria</taxon>
        <taxon>Archosauria</taxon>
        <taxon>Dinosauria</taxon>
        <taxon>Saurischia</taxon>
        <taxon>Theropoda</taxon>
        <taxon>Coelurosauria</taxon>
        <taxon>Aves</taxon>
        <taxon>Neognathae</taxon>
        <taxon>Galloanserae</taxon>
        <taxon>Galliformes</taxon>
        <taxon>Phasianidae</taxon>
        <taxon>Phasianinae</taxon>
        <taxon>Gallus</taxon>
    </lineage>
</organism>
<protein>
    <recommendedName>
        <fullName>Neurokinin-A</fullName>
    </recommendedName>
    <alternativeName>
        <fullName>Neuromedin-L</fullName>
    </alternativeName>
    <alternativeName>
        <fullName>Substance K</fullName>
    </alternativeName>
</protein>
<name>TKNB_CHICK</name>
<reference key="1">
    <citation type="journal article" date="1988" name="Regul. Pept.">
        <title>[Arg3]substance P and neurokinin A from chicken small intestine.</title>
        <authorList>
            <person name="Conlon J.M."/>
            <person name="Katsoulis S."/>
            <person name="Schmidt W.E."/>
            <person name="Thim L."/>
        </authorList>
    </citation>
    <scope>PROTEIN SEQUENCE</scope>
    <scope>AMIDATION AT MET-10</scope>
    <source>
        <tissue>Intestine</tissue>
    </source>
</reference>
<feature type="peptide" id="PRO_0000044425" description="Neurokinin-A">
    <location>
        <begin position="1"/>
        <end position="10"/>
    </location>
</feature>
<feature type="modified residue" description="Methionine amide" evidence="1">
    <location>
        <position position="10"/>
    </location>
</feature>
<feature type="helix" evidence="3">
    <location>
        <begin position="4"/>
        <end position="9"/>
    </location>
</feature>
<sequence length="10" mass="1134">HKTDSFVGLM</sequence>
<dbReference type="PIR" id="JN0024">
    <property type="entry name" value="JN0024"/>
</dbReference>
<dbReference type="PDB" id="1N6T">
    <property type="method" value="NMR"/>
    <property type="chains" value="A=1-10"/>
</dbReference>
<dbReference type="PDBsum" id="1N6T"/>
<dbReference type="BMRB" id="P19851"/>
<dbReference type="SMR" id="P19851"/>
<dbReference type="InParanoid" id="P19851"/>
<dbReference type="EvolutionaryTrace" id="P19851"/>
<dbReference type="Proteomes" id="UP000000539">
    <property type="component" value="Unassembled WGS sequence"/>
</dbReference>
<dbReference type="GO" id="GO:0005576">
    <property type="term" value="C:extracellular region"/>
    <property type="evidence" value="ECO:0007669"/>
    <property type="project" value="UniProtKB-SubCell"/>
</dbReference>
<dbReference type="GO" id="GO:0007218">
    <property type="term" value="P:neuropeptide signaling pathway"/>
    <property type="evidence" value="ECO:0007669"/>
    <property type="project" value="UniProtKB-KW"/>
</dbReference>
<dbReference type="InterPro" id="IPR013055">
    <property type="entry name" value="Tachy_Neuro_lke_CS"/>
</dbReference>
<dbReference type="PROSITE" id="PS00267">
    <property type="entry name" value="TACHYKININ"/>
    <property type="match status" value="1"/>
</dbReference>
<keyword id="KW-0002">3D-structure</keyword>
<keyword id="KW-0027">Amidation</keyword>
<keyword id="KW-0903">Direct protein sequencing</keyword>
<keyword id="KW-0527">Neuropeptide</keyword>
<keyword id="KW-1185">Reference proteome</keyword>
<keyword id="KW-0964">Secreted</keyword>
<proteinExistence type="evidence at protein level"/>